<evidence type="ECO:0000255" key="1">
    <source>
        <dbReference type="HAMAP-Rule" id="MF_01401"/>
    </source>
</evidence>
<reference key="1">
    <citation type="journal article" date="2009" name="BMC Microbiol.">
        <title>The genome sequence of Geobacter metallireducens: features of metabolism, physiology and regulation common and dissimilar to Geobacter sulfurreducens.</title>
        <authorList>
            <person name="Aklujkar M."/>
            <person name="Krushkal J."/>
            <person name="DiBartolo G."/>
            <person name="Lapidus A."/>
            <person name="Land M.L."/>
            <person name="Lovley D.R."/>
        </authorList>
    </citation>
    <scope>NUCLEOTIDE SEQUENCE [LARGE SCALE GENOMIC DNA]</scope>
    <source>
        <strain>ATCC 53774 / DSM 7210 / GS-15</strain>
    </source>
</reference>
<sequence length="162" mass="18480">MDETPELEKATFGAGCFWHVEAEFRRVSGVVATHAGYMGGWKDHPTYEEVCSKETGHAEVVEVVYDPARVSYDELLRIFWTIHDPTQLNRQGPDIGTNYRSVIFFHTPEQEQAARLSMEKEGGSGRYSRPIVTEIASASAFWWAEEYHQQYLEKRGGGSCNW</sequence>
<proteinExistence type="inferred from homology"/>
<organism>
    <name type="scientific">Geobacter metallireducens (strain ATCC 53774 / DSM 7210 / GS-15)</name>
    <dbReference type="NCBI Taxonomy" id="269799"/>
    <lineage>
        <taxon>Bacteria</taxon>
        <taxon>Pseudomonadati</taxon>
        <taxon>Thermodesulfobacteriota</taxon>
        <taxon>Desulfuromonadia</taxon>
        <taxon>Geobacterales</taxon>
        <taxon>Geobacteraceae</taxon>
        <taxon>Geobacter</taxon>
    </lineage>
</organism>
<feature type="chain" id="PRO_1000087349" description="Peptide methionine sulfoxide reductase MsrA">
    <location>
        <begin position="1"/>
        <end position="162"/>
    </location>
</feature>
<feature type="active site" evidence="1">
    <location>
        <position position="16"/>
    </location>
</feature>
<gene>
    <name evidence="1" type="primary">msrA</name>
    <name type="ordered locus">Gmet_0268</name>
</gene>
<protein>
    <recommendedName>
        <fullName evidence="1">Peptide methionine sulfoxide reductase MsrA</fullName>
        <shortName evidence="1">Protein-methionine-S-oxide reductase</shortName>
        <ecNumber evidence="1">1.8.4.11</ecNumber>
    </recommendedName>
    <alternativeName>
        <fullName evidence="1">Peptide-methionine (S)-S-oxide reductase</fullName>
        <shortName evidence="1">Peptide Met(O) reductase</shortName>
    </alternativeName>
</protein>
<keyword id="KW-0560">Oxidoreductase</keyword>
<keyword id="KW-1185">Reference proteome</keyword>
<accession>Q39Z11</accession>
<name>MSRA_GEOMG</name>
<dbReference type="EC" id="1.8.4.11" evidence="1"/>
<dbReference type="EMBL" id="CP000148">
    <property type="protein sequence ID" value="ABB30513.1"/>
    <property type="molecule type" value="Genomic_DNA"/>
</dbReference>
<dbReference type="RefSeq" id="WP_004513585.1">
    <property type="nucleotide sequence ID" value="NC_007517.1"/>
</dbReference>
<dbReference type="SMR" id="Q39Z11"/>
<dbReference type="STRING" id="269799.Gmet_0268"/>
<dbReference type="KEGG" id="gme:Gmet_0268"/>
<dbReference type="eggNOG" id="COG0225">
    <property type="taxonomic scope" value="Bacteria"/>
</dbReference>
<dbReference type="HOGENOM" id="CLU_031040_10_2_7"/>
<dbReference type="Proteomes" id="UP000007073">
    <property type="component" value="Chromosome"/>
</dbReference>
<dbReference type="GO" id="GO:0005737">
    <property type="term" value="C:cytoplasm"/>
    <property type="evidence" value="ECO:0007669"/>
    <property type="project" value="TreeGrafter"/>
</dbReference>
<dbReference type="GO" id="GO:0036456">
    <property type="term" value="F:L-methionine-(S)-S-oxide reductase activity"/>
    <property type="evidence" value="ECO:0007669"/>
    <property type="project" value="TreeGrafter"/>
</dbReference>
<dbReference type="GO" id="GO:0008113">
    <property type="term" value="F:peptide-methionine (S)-S-oxide reductase activity"/>
    <property type="evidence" value="ECO:0007669"/>
    <property type="project" value="UniProtKB-UniRule"/>
</dbReference>
<dbReference type="GO" id="GO:0034599">
    <property type="term" value="P:cellular response to oxidative stress"/>
    <property type="evidence" value="ECO:0007669"/>
    <property type="project" value="TreeGrafter"/>
</dbReference>
<dbReference type="GO" id="GO:0036211">
    <property type="term" value="P:protein modification process"/>
    <property type="evidence" value="ECO:0007669"/>
    <property type="project" value="UniProtKB-UniRule"/>
</dbReference>
<dbReference type="Gene3D" id="3.30.1060.10">
    <property type="entry name" value="Peptide methionine sulphoxide reductase MsrA"/>
    <property type="match status" value="1"/>
</dbReference>
<dbReference type="HAMAP" id="MF_01401">
    <property type="entry name" value="MsrA"/>
    <property type="match status" value="1"/>
</dbReference>
<dbReference type="InterPro" id="IPR002569">
    <property type="entry name" value="Met_Sox_Rdtase_MsrA_dom"/>
</dbReference>
<dbReference type="InterPro" id="IPR036509">
    <property type="entry name" value="Met_Sox_Rdtase_MsrA_sf"/>
</dbReference>
<dbReference type="InterPro" id="IPR050162">
    <property type="entry name" value="MsrA_MetSO_reductase"/>
</dbReference>
<dbReference type="NCBIfam" id="TIGR00401">
    <property type="entry name" value="msrA"/>
    <property type="match status" value="1"/>
</dbReference>
<dbReference type="PANTHER" id="PTHR42799">
    <property type="entry name" value="MITOCHONDRIAL PEPTIDE METHIONINE SULFOXIDE REDUCTASE"/>
    <property type="match status" value="1"/>
</dbReference>
<dbReference type="PANTHER" id="PTHR42799:SF2">
    <property type="entry name" value="MITOCHONDRIAL PEPTIDE METHIONINE SULFOXIDE REDUCTASE"/>
    <property type="match status" value="1"/>
</dbReference>
<dbReference type="Pfam" id="PF01625">
    <property type="entry name" value="PMSR"/>
    <property type="match status" value="1"/>
</dbReference>
<dbReference type="SUPFAM" id="SSF55068">
    <property type="entry name" value="Peptide methionine sulfoxide reductase"/>
    <property type="match status" value="1"/>
</dbReference>
<comment type="function">
    <text evidence="1">Has an important function as a repair enzyme for proteins that have been inactivated by oxidation. Catalyzes the reversible oxidation-reduction of methionine sulfoxide in proteins to methionine.</text>
</comment>
<comment type="catalytic activity">
    <reaction evidence="1">
        <text>L-methionyl-[protein] + [thioredoxin]-disulfide + H2O = L-methionyl-(S)-S-oxide-[protein] + [thioredoxin]-dithiol</text>
        <dbReference type="Rhea" id="RHEA:14217"/>
        <dbReference type="Rhea" id="RHEA-COMP:10698"/>
        <dbReference type="Rhea" id="RHEA-COMP:10700"/>
        <dbReference type="Rhea" id="RHEA-COMP:12313"/>
        <dbReference type="Rhea" id="RHEA-COMP:12315"/>
        <dbReference type="ChEBI" id="CHEBI:15377"/>
        <dbReference type="ChEBI" id="CHEBI:16044"/>
        <dbReference type="ChEBI" id="CHEBI:29950"/>
        <dbReference type="ChEBI" id="CHEBI:44120"/>
        <dbReference type="ChEBI" id="CHEBI:50058"/>
        <dbReference type="EC" id="1.8.4.11"/>
    </reaction>
</comment>
<comment type="catalytic activity">
    <reaction evidence="1">
        <text>[thioredoxin]-disulfide + L-methionine + H2O = L-methionine (S)-S-oxide + [thioredoxin]-dithiol</text>
        <dbReference type="Rhea" id="RHEA:19993"/>
        <dbReference type="Rhea" id="RHEA-COMP:10698"/>
        <dbReference type="Rhea" id="RHEA-COMP:10700"/>
        <dbReference type="ChEBI" id="CHEBI:15377"/>
        <dbReference type="ChEBI" id="CHEBI:29950"/>
        <dbReference type="ChEBI" id="CHEBI:50058"/>
        <dbReference type="ChEBI" id="CHEBI:57844"/>
        <dbReference type="ChEBI" id="CHEBI:58772"/>
        <dbReference type="EC" id="1.8.4.11"/>
    </reaction>
</comment>
<comment type="similarity">
    <text evidence="1">Belongs to the MsrA Met sulfoxide reductase family.</text>
</comment>